<accession>O31588</accession>
<organism>
    <name type="scientific">Bacillus subtilis (strain 168)</name>
    <dbReference type="NCBI Taxonomy" id="224308"/>
    <lineage>
        <taxon>Bacteria</taxon>
        <taxon>Bacillati</taxon>
        <taxon>Bacillota</taxon>
        <taxon>Bacilli</taxon>
        <taxon>Bacillales</taxon>
        <taxon>Bacillaceae</taxon>
        <taxon>Bacillus</taxon>
    </lineage>
</organism>
<protein>
    <recommendedName>
        <fullName>Uncharacterized protein YhzB</fullName>
    </recommendedName>
</protein>
<feature type="chain" id="PRO_0000049580" description="Uncharacterized protein YhzB">
    <location>
        <begin position="1"/>
        <end position="207"/>
    </location>
</feature>
<dbReference type="EMBL" id="AL009126">
    <property type="protein sequence ID" value="CAB12718.1"/>
    <property type="molecule type" value="Genomic_DNA"/>
</dbReference>
<dbReference type="PIR" id="G69835">
    <property type="entry name" value="G69835"/>
</dbReference>
<dbReference type="RefSeq" id="NP_388771.1">
    <property type="nucleotide sequence ID" value="NC_000964.3"/>
</dbReference>
<dbReference type="RefSeq" id="WP_003245517.1">
    <property type="nucleotide sequence ID" value="NZ_OZ025638.1"/>
</dbReference>
<dbReference type="SMR" id="O31588"/>
<dbReference type="FunCoup" id="O31588">
    <property type="interactions" value="26"/>
</dbReference>
<dbReference type="STRING" id="224308.BSU08900"/>
<dbReference type="PaxDb" id="224308-BSU08900"/>
<dbReference type="EnsemblBacteria" id="CAB12718">
    <property type="protein sequence ID" value="CAB12718"/>
    <property type="gene ID" value="BSU_08900"/>
</dbReference>
<dbReference type="GeneID" id="939736"/>
<dbReference type="KEGG" id="bsu:BSU08900"/>
<dbReference type="PATRIC" id="fig|224308.179.peg.961"/>
<dbReference type="eggNOG" id="COG3382">
    <property type="taxonomic scope" value="Bacteria"/>
</dbReference>
<dbReference type="InParanoid" id="O31588"/>
<dbReference type="OrthoDB" id="9789812at2"/>
<dbReference type="BioCyc" id="BSUB:BSU08900-MONOMER"/>
<dbReference type="Proteomes" id="UP000001570">
    <property type="component" value="Chromosome"/>
</dbReference>
<dbReference type="SUPFAM" id="SSF56037">
    <property type="entry name" value="PheT/TilS domain"/>
    <property type="match status" value="1"/>
</dbReference>
<sequence>MNIKLDSVITERAAGLHAAAVIYENIEVGSSPQMLKGRLRLFQESLFFDYADGGISDESFVKEWQKLFKQLNPSFEGETTPMEDMLVPISKEQFMESKDSAHDTIDFFALKYSLPIMIYDAGKLHEPVRISLGEKENILLFSDENGIFGDFKNSVNHYPVSNETKNMLQIIFFPPSIEKSSAVNLLSSLTKMFEQIHGGTHTVHWLT</sequence>
<gene>
    <name type="primary">yhzB</name>
    <name type="ordered locus">BSU08900</name>
</gene>
<keyword id="KW-1185">Reference proteome</keyword>
<reference key="1">
    <citation type="journal article" date="1997" name="Nature">
        <title>The complete genome sequence of the Gram-positive bacterium Bacillus subtilis.</title>
        <authorList>
            <person name="Kunst F."/>
            <person name="Ogasawara N."/>
            <person name="Moszer I."/>
            <person name="Albertini A.M."/>
            <person name="Alloni G."/>
            <person name="Azevedo V."/>
            <person name="Bertero M.G."/>
            <person name="Bessieres P."/>
            <person name="Bolotin A."/>
            <person name="Borchert S."/>
            <person name="Borriss R."/>
            <person name="Boursier L."/>
            <person name="Brans A."/>
            <person name="Braun M."/>
            <person name="Brignell S.C."/>
            <person name="Bron S."/>
            <person name="Brouillet S."/>
            <person name="Bruschi C.V."/>
            <person name="Caldwell B."/>
            <person name="Capuano V."/>
            <person name="Carter N.M."/>
            <person name="Choi S.-K."/>
            <person name="Codani J.-J."/>
            <person name="Connerton I.F."/>
            <person name="Cummings N.J."/>
            <person name="Daniel R.A."/>
            <person name="Denizot F."/>
            <person name="Devine K.M."/>
            <person name="Duesterhoeft A."/>
            <person name="Ehrlich S.D."/>
            <person name="Emmerson P.T."/>
            <person name="Entian K.-D."/>
            <person name="Errington J."/>
            <person name="Fabret C."/>
            <person name="Ferrari E."/>
            <person name="Foulger D."/>
            <person name="Fritz C."/>
            <person name="Fujita M."/>
            <person name="Fujita Y."/>
            <person name="Fuma S."/>
            <person name="Galizzi A."/>
            <person name="Galleron N."/>
            <person name="Ghim S.-Y."/>
            <person name="Glaser P."/>
            <person name="Goffeau A."/>
            <person name="Golightly E.J."/>
            <person name="Grandi G."/>
            <person name="Guiseppi G."/>
            <person name="Guy B.J."/>
            <person name="Haga K."/>
            <person name="Haiech J."/>
            <person name="Harwood C.R."/>
            <person name="Henaut A."/>
            <person name="Hilbert H."/>
            <person name="Holsappel S."/>
            <person name="Hosono S."/>
            <person name="Hullo M.-F."/>
            <person name="Itaya M."/>
            <person name="Jones L.-M."/>
            <person name="Joris B."/>
            <person name="Karamata D."/>
            <person name="Kasahara Y."/>
            <person name="Klaerr-Blanchard M."/>
            <person name="Klein C."/>
            <person name="Kobayashi Y."/>
            <person name="Koetter P."/>
            <person name="Koningstein G."/>
            <person name="Krogh S."/>
            <person name="Kumano M."/>
            <person name="Kurita K."/>
            <person name="Lapidus A."/>
            <person name="Lardinois S."/>
            <person name="Lauber J."/>
            <person name="Lazarevic V."/>
            <person name="Lee S.-M."/>
            <person name="Levine A."/>
            <person name="Liu H."/>
            <person name="Masuda S."/>
            <person name="Mauel C."/>
            <person name="Medigue C."/>
            <person name="Medina N."/>
            <person name="Mellado R.P."/>
            <person name="Mizuno M."/>
            <person name="Moestl D."/>
            <person name="Nakai S."/>
            <person name="Noback M."/>
            <person name="Noone D."/>
            <person name="O'Reilly M."/>
            <person name="Ogawa K."/>
            <person name="Ogiwara A."/>
            <person name="Oudega B."/>
            <person name="Park S.-H."/>
            <person name="Parro V."/>
            <person name="Pohl T.M."/>
            <person name="Portetelle D."/>
            <person name="Porwollik S."/>
            <person name="Prescott A.M."/>
            <person name="Presecan E."/>
            <person name="Pujic P."/>
            <person name="Purnelle B."/>
            <person name="Rapoport G."/>
            <person name="Rey M."/>
            <person name="Reynolds S."/>
            <person name="Rieger M."/>
            <person name="Rivolta C."/>
            <person name="Rocha E."/>
            <person name="Roche B."/>
            <person name="Rose M."/>
            <person name="Sadaie Y."/>
            <person name="Sato T."/>
            <person name="Scanlan E."/>
            <person name="Schleich S."/>
            <person name="Schroeter R."/>
            <person name="Scoffone F."/>
            <person name="Sekiguchi J."/>
            <person name="Sekowska A."/>
            <person name="Seror S.J."/>
            <person name="Serror P."/>
            <person name="Shin B.-S."/>
            <person name="Soldo B."/>
            <person name="Sorokin A."/>
            <person name="Tacconi E."/>
            <person name="Takagi T."/>
            <person name="Takahashi H."/>
            <person name="Takemaru K."/>
            <person name="Takeuchi M."/>
            <person name="Tamakoshi A."/>
            <person name="Tanaka T."/>
            <person name="Terpstra P."/>
            <person name="Tognoni A."/>
            <person name="Tosato V."/>
            <person name="Uchiyama S."/>
            <person name="Vandenbol M."/>
            <person name="Vannier F."/>
            <person name="Vassarotti A."/>
            <person name="Viari A."/>
            <person name="Wambutt R."/>
            <person name="Wedler E."/>
            <person name="Wedler H."/>
            <person name="Weitzenegger T."/>
            <person name="Winters P."/>
            <person name="Wipat A."/>
            <person name="Yamamoto H."/>
            <person name="Yamane K."/>
            <person name="Yasumoto K."/>
            <person name="Yata K."/>
            <person name="Yoshida K."/>
            <person name="Yoshikawa H.-F."/>
            <person name="Zumstein E."/>
            <person name="Yoshikawa H."/>
            <person name="Danchin A."/>
        </authorList>
    </citation>
    <scope>NUCLEOTIDE SEQUENCE [LARGE SCALE GENOMIC DNA]</scope>
    <source>
        <strain>168</strain>
    </source>
</reference>
<name>YHZB_BACSU</name>
<proteinExistence type="predicted"/>